<proteinExistence type="evidence at protein level"/>
<keyword id="KW-0597">Phosphoprotein</keyword>
<keyword id="KW-0687">Ribonucleoprotein</keyword>
<keyword id="KW-0689">Ribosomal protein</keyword>
<feature type="chain" id="PRO_0000392514" description="Large ribosomal subunit protein P2">
    <location>
        <begin position="1" status="less than"/>
        <end position="10" status="greater than"/>
    </location>
</feature>
<feature type="non-terminal residue" evidence="3">
    <location>
        <position position="1"/>
    </location>
</feature>
<feature type="non-terminal residue" evidence="3">
    <location>
        <position position="10"/>
    </location>
</feature>
<organism>
    <name type="scientific">Pseudotsuga menziesii</name>
    <name type="common">Douglas-fir</name>
    <name type="synonym">Abies menziesii</name>
    <dbReference type="NCBI Taxonomy" id="3357"/>
    <lineage>
        <taxon>Eukaryota</taxon>
        <taxon>Viridiplantae</taxon>
        <taxon>Streptophyta</taxon>
        <taxon>Embryophyta</taxon>
        <taxon>Tracheophyta</taxon>
        <taxon>Spermatophyta</taxon>
        <taxon>Pinopsida</taxon>
        <taxon>Pinidae</taxon>
        <taxon>Conifers I</taxon>
        <taxon>Pinales</taxon>
        <taxon>Pinaceae</taxon>
        <taxon>Pseudotsuga</taxon>
    </lineage>
</organism>
<sequence>DITEVIAAGR</sequence>
<protein>
    <recommendedName>
        <fullName evidence="4">Large ribosomal subunit protein P2</fullName>
    </recommendedName>
    <alternativeName>
        <fullName evidence="1">60S acidic ribosomal protein P2</fullName>
    </alternativeName>
</protein>
<evidence type="ECO:0000250" key="1">
    <source>
        <dbReference type="UniProtKB" id="P46252"/>
    </source>
</evidence>
<evidence type="ECO:0000255" key="2"/>
<evidence type="ECO:0000303" key="3">
    <source>
    </source>
</evidence>
<evidence type="ECO:0000305" key="4"/>
<reference key="1">
    <citation type="journal article" date="2008" name="J. Proteomics">
        <title>A proteomics approach to identify proteins differentially expressed in Douglas-fir seedlings infected by Phellinus sulphurascens.</title>
        <authorList>
            <person name="Islam M.A."/>
            <person name="Sturrock R.N."/>
            <person name="Ekramoddoullah A.K.M."/>
        </authorList>
    </citation>
    <scope>IDENTIFICATION BY MASS SPECTROMETRY</scope>
</reference>
<dbReference type="GO" id="GO:1990904">
    <property type="term" value="C:ribonucleoprotein complex"/>
    <property type="evidence" value="ECO:0007669"/>
    <property type="project" value="UniProtKB-KW"/>
</dbReference>
<dbReference type="GO" id="GO:0005840">
    <property type="term" value="C:ribosome"/>
    <property type="evidence" value="ECO:0007669"/>
    <property type="project" value="UniProtKB-KW"/>
</dbReference>
<name>RLA2_PSEMZ</name>
<comment type="function">
    <text evidence="1">Plays an important role in the elongation step of protein synthesis.</text>
</comment>
<comment type="subunit">
    <text evidence="1">P1 and P2 exist as dimers at the large ribosomal subunit.</text>
</comment>
<comment type="PTM">
    <text evidence="1">Phosphorylated.</text>
</comment>
<comment type="similarity">
    <text evidence="2">Belongs to the eukaryotic ribosomal protein P1/P2 family.</text>
</comment>
<accession>P85962</accession>